<sequence>MQLTPREVEKLMIYTLSDVAFKRKARGLKLNYPEAVSIITVTAMEGARDGKSVEDVMKEASKVLTKDDVMDGVADLIPNVQVEAIFTDGSRLVTVHDPIK</sequence>
<gene>
    <name evidence="1" type="primary">ureA</name>
    <name type="ordered locus">YE0951</name>
</gene>
<dbReference type="EC" id="3.5.1.5" evidence="1"/>
<dbReference type="EMBL" id="AM286415">
    <property type="protein sequence ID" value="CAL11049.1"/>
    <property type="molecule type" value="Genomic_DNA"/>
</dbReference>
<dbReference type="RefSeq" id="WP_002215288.1">
    <property type="nucleotide sequence ID" value="NC_008800.1"/>
</dbReference>
<dbReference type="RefSeq" id="YP_001005285.1">
    <property type="nucleotide sequence ID" value="NC_008800.1"/>
</dbReference>
<dbReference type="SMR" id="A1JKD7"/>
<dbReference type="KEGG" id="yen:YE0951"/>
<dbReference type="PATRIC" id="fig|393305.7.peg.1052"/>
<dbReference type="eggNOG" id="COG0831">
    <property type="taxonomic scope" value="Bacteria"/>
</dbReference>
<dbReference type="HOGENOM" id="CLU_145825_1_0_6"/>
<dbReference type="OrthoDB" id="9797217at2"/>
<dbReference type="UniPathway" id="UPA00258">
    <property type="reaction ID" value="UER00370"/>
</dbReference>
<dbReference type="Proteomes" id="UP000000642">
    <property type="component" value="Chromosome"/>
</dbReference>
<dbReference type="GO" id="GO:0005737">
    <property type="term" value="C:cytoplasm"/>
    <property type="evidence" value="ECO:0007669"/>
    <property type="project" value="UniProtKB-SubCell"/>
</dbReference>
<dbReference type="GO" id="GO:0016151">
    <property type="term" value="F:nickel cation binding"/>
    <property type="evidence" value="ECO:0007669"/>
    <property type="project" value="InterPro"/>
</dbReference>
<dbReference type="GO" id="GO:0009039">
    <property type="term" value="F:urease activity"/>
    <property type="evidence" value="ECO:0007669"/>
    <property type="project" value="UniProtKB-UniRule"/>
</dbReference>
<dbReference type="GO" id="GO:0043419">
    <property type="term" value="P:urea catabolic process"/>
    <property type="evidence" value="ECO:0007669"/>
    <property type="project" value="UniProtKB-UniRule"/>
</dbReference>
<dbReference type="CDD" id="cd00390">
    <property type="entry name" value="Urease_gamma"/>
    <property type="match status" value="1"/>
</dbReference>
<dbReference type="Gene3D" id="3.30.280.10">
    <property type="entry name" value="Urease, gamma-like subunit"/>
    <property type="match status" value="1"/>
</dbReference>
<dbReference type="HAMAP" id="MF_00739">
    <property type="entry name" value="Urease_gamma"/>
    <property type="match status" value="1"/>
</dbReference>
<dbReference type="InterPro" id="IPR012010">
    <property type="entry name" value="Urease_gamma"/>
</dbReference>
<dbReference type="InterPro" id="IPR002026">
    <property type="entry name" value="Urease_gamma/gamma-beta_su"/>
</dbReference>
<dbReference type="InterPro" id="IPR036463">
    <property type="entry name" value="Urease_gamma_sf"/>
</dbReference>
<dbReference type="InterPro" id="IPR050069">
    <property type="entry name" value="Urease_subunit"/>
</dbReference>
<dbReference type="NCBIfam" id="NF009712">
    <property type="entry name" value="PRK13241.1"/>
    <property type="match status" value="1"/>
</dbReference>
<dbReference type="NCBIfam" id="TIGR00193">
    <property type="entry name" value="urease_gam"/>
    <property type="match status" value="1"/>
</dbReference>
<dbReference type="PANTHER" id="PTHR33569">
    <property type="entry name" value="UREASE"/>
    <property type="match status" value="1"/>
</dbReference>
<dbReference type="PANTHER" id="PTHR33569:SF1">
    <property type="entry name" value="UREASE"/>
    <property type="match status" value="1"/>
</dbReference>
<dbReference type="Pfam" id="PF00547">
    <property type="entry name" value="Urease_gamma"/>
    <property type="match status" value="1"/>
</dbReference>
<dbReference type="PIRSF" id="PIRSF001223">
    <property type="entry name" value="Urease_gamma"/>
    <property type="match status" value="1"/>
</dbReference>
<dbReference type="SUPFAM" id="SSF54111">
    <property type="entry name" value="Urease, gamma-subunit"/>
    <property type="match status" value="1"/>
</dbReference>
<protein>
    <recommendedName>
        <fullName evidence="1">Urease subunit gamma</fullName>
        <ecNumber evidence="1">3.5.1.5</ecNumber>
    </recommendedName>
    <alternativeName>
        <fullName evidence="1">Urea amidohydrolase subunit gamma</fullName>
    </alternativeName>
</protein>
<organism>
    <name type="scientific">Yersinia enterocolitica serotype O:8 / biotype 1B (strain NCTC 13174 / 8081)</name>
    <dbReference type="NCBI Taxonomy" id="393305"/>
    <lineage>
        <taxon>Bacteria</taxon>
        <taxon>Pseudomonadati</taxon>
        <taxon>Pseudomonadota</taxon>
        <taxon>Gammaproteobacteria</taxon>
        <taxon>Enterobacterales</taxon>
        <taxon>Yersiniaceae</taxon>
        <taxon>Yersinia</taxon>
    </lineage>
</organism>
<keyword id="KW-0963">Cytoplasm</keyword>
<keyword id="KW-0378">Hydrolase</keyword>
<proteinExistence type="inferred from homology"/>
<name>URE3_YERE8</name>
<evidence type="ECO:0000255" key="1">
    <source>
        <dbReference type="HAMAP-Rule" id="MF_00739"/>
    </source>
</evidence>
<comment type="catalytic activity">
    <reaction evidence="1">
        <text>urea + 2 H2O + H(+) = hydrogencarbonate + 2 NH4(+)</text>
        <dbReference type="Rhea" id="RHEA:20557"/>
        <dbReference type="ChEBI" id="CHEBI:15377"/>
        <dbReference type="ChEBI" id="CHEBI:15378"/>
        <dbReference type="ChEBI" id="CHEBI:16199"/>
        <dbReference type="ChEBI" id="CHEBI:17544"/>
        <dbReference type="ChEBI" id="CHEBI:28938"/>
        <dbReference type="EC" id="3.5.1.5"/>
    </reaction>
</comment>
<comment type="pathway">
    <text evidence="1">Nitrogen metabolism; urea degradation; CO(2) and NH(3) from urea (urease route): step 1/1.</text>
</comment>
<comment type="subunit">
    <text evidence="1">Heterotrimer of UreA (gamma), UreB (beta) and UreC (alpha) subunits. Three heterotrimers associate to form the active enzyme.</text>
</comment>
<comment type="subcellular location">
    <subcellularLocation>
        <location evidence="1">Cytoplasm</location>
    </subcellularLocation>
</comment>
<comment type="similarity">
    <text evidence="1">Belongs to the urease gamma subunit family.</text>
</comment>
<reference key="1">
    <citation type="journal article" date="2006" name="PLoS Genet.">
        <title>The complete genome sequence and comparative genome analysis of the high pathogenicity Yersinia enterocolitica strain 8081.</title>
        <authorList>
            <person name="Thomson N.R."/>
            <person name="Howard S."/>
            <person name="Wren B.W."/>
            <person name="Holden M.T.G."/>
            <person name="Crossman L."/>
            <person name="Challis G.L."/>
            <person name="Churcher C."/>
            <person name="Mungall K."/>
            <person name="Brooks K."/>
            <person name="Chillingworth T."/>
            <person name="Feltwell T."/>
            <person name="Abdellah Z."/>
            <person name="Hauser H."/>
            <person name="Jagels K."/>
            <person name="Maddison M."/>
            <person name="Moule S."/>
            <person name="Sanders M."/>
            <person name="Whitehead S."/>
            <person name="Quail M.A."/>
            <person name="Dougan G."/>
            <person name="Parkhill J."/>
            <person name="Prentice M.B."/>
        </authorList>
    </citation>
    <scope>NUCLEOTIDE SEQUENCE [LARGE SCALE GENOMIC DNA]</scope>
    <source>
        <strain>NCTC 13174 / 8081</strain>
    </source>
</reference>
<feature type="chain" id="PRO_1000046377" description="Urease subunit gamma">
    <location>
        <begin position="1"/>
        <end position="100"/>
    </location>
</feature>
<accession>A1JKD7</accession>